<feature type="chain" id="PRO_1000075069" description="Adenosine 5'-phosphosulfate reductase">
    <location>
        <begin position="1"/>
        <end position="234"/>
    </location>
</feature>
<feature type="active site" description="Nucleophile; cysteine thiosulfonate intermediate" evidence="1">
    <location>
        <position position="229"/>
    </location>
</feature>
<feature type="binding site" evidence="1">
    <location>
        <position position="120"/>
    </location>
    <ligand>
        <name>[4Fe-4S] cluster</name>
        <dbReference type="ChEBI" id="CHEBI:49883"/>
    </ligand>
</feature>
<feature type="binding site" evidence="1">
    <location>
        <position position="121"/>
    </location>
    <ligand>
        <name>[4Fe-4S] cluster</name>
        <dbReference type="ChEBI" id="CHEBI:49883"/>
    </ligand>
</feature>
<feature type="binding site" evidence="1">
    <location>
        <position position="203"/>
    </location>
    <ligand>
        <name>[4Fe-4S] cluster</name>
        <dbReference type="ChEBI" id="CHEBI:49883"/>
    </ligand>
</feature>
<feature type="binding site" evidence="1">
    <location>
        <position position="206"/>
    </location>
    <ligand>
        <name>[4Fe-4S] cluster</name>
        <dbReference type="ChEBI" id="CHEBI:49883"/>
    </ligand>
</feature>
<proteinExistence type="inferred from homology"/>
<accession>A7GMW0</accession>
<organism>
    <name type="scientific">Bacillus cytotoxicus (strain DSM 22905 / CIP 110041 / 391-98 / NVH 391-98)</name>
    <dbReference type="NCBI Taxonomy" id="315749"/>
    <lineage>
        <taxon>Bacteria</taxon>
        <taxon>Bacillati</taxon>
        <taxon>Bacillota</taxon>
        <taxon>Bacilli</taxon>
        <taxon>Bacillales</taxon>
        <taxon>Bacillaceae</taxon>
        <taxon>Bacillus</taxon>
        <taxon>Bacillus cereus group</taxon>
    </lineage>
</organism>
<comment type="function">
    <text evidence="1">Catalyzes the formation of sulfite from adenosine 5'-phosphosulfate (APS) using thioredoxin as an electron donor.</text>
</comment>
<comment type="catalytic activity">
    <reaction evidence="1">
        <text>[thioredoxin]-disulfide + sulfite + AMP + 2 H(+) = adenosine 5'-phosphosulfate + [thioredoxin]-dithiol</text>
        <dbReference type="Rhea" id="RHEA:21976"/>
        <dbReference type="Rhea" id="RHEA-COMP:10698"/>
        <dbReference type="Rhea" id="RHEA-COMP:10700"/>
        <dbReference type="ChEBI" id="CHEBI:15378"/>
        <dbReference type="ChEBI" id="CHEBI:17359"/>
        <dbReference type="ChEBI" id="CHEBI:29950"/>
        <dbReference type="ChEBI" id="CHEBI:50058"/>
        <dbReference type="ChEBI" id="CHEBI:58243"/>
        <dbReference type="ChEBI" id="CHEBI:456215"/>
        <dbReference type="EC" id="1.8.4.10"/>
    </reaction>
</comment>
<comment type="cofactor">
    <cofactor evidence="1">
        <name>[4Fe-4S] cluster</name>
        <dbReference type="ChEBI" id="CHEBI:49883"/>
    </cofactor>
    <text evidence="1">Binds 1 [4Fe-4S] cluster per subunit.</text>
</comment>
<comment type="pathway">
    <text evidence="1">Sulfur metabolism; hydrogen sulfide biosynthesis; sulfite from sulfate.</text>
</comment>
<comment type="subcellular location">
    <subcellularLocation>
        <location evidence="1">Cytoplasm</location>
    </subcellularLocation>
</comment>
<comment type="similarity">
    <text evidence="1">Belongs to the PAPS reductase family. CysH subfamily.</text>
</comment>
<name>CYSH_BACCN</name>
<protein>
    <recommendedName>
        <fullName evidence="1">Adenosine 5'-phosphosulfate reductase</fullName>
        <shortName evidence="1">APS reductase</shortName>
        <ecNumber evidence="1">1.8.4.10</ecNumber>
    </recommendedName>
    <alternativeName>
        <fullName evidence="1">5'-adenylylsulfate reductase</fullName>
    </alternativeName>
    <alternativeName>
        <fullName evidence="1">Thioredoxin-dependent 5'-adenylylsulfate reductase</fullName>
    </alternativeName>
</protein>
<dbReference type="EC" id="1.8.4.10" evidence="1"/>
<dbReference type="EMBL" id="CP000764">
    <property type="protein sequence ID" value="ABS21468.1"/>
    <property type="molecule type" value="Genomic_DNA"/>
</dbReference>
<dbReference type="RefSeq" id="WP_011984221.1">
    <property type="nucleotide sequence ID" value="NC_009674.1"/>
</dbReference>
<dbReference type="SMR" id="A7GMW0"/>
<dbReference type="STRING" id="315749.Bcer98_1143"/>
<dbReference type="GeneID" id="33896497"/>
<dbReference type="KEGG" id="bcy:Bcer98_1143"/>
<dbReference type="eggNOG" id="COG0175">
    <property type="taxonomic scope" value="Bacteria"/>
</dbReference>
<dbReference type="HOGENOM" id="CLU_044089_2_1_9"/>
<dbReference type="OrthoDB" id="9772604at2"/>
<dbReference type="Proteomes" id="UP000002300">
    <property type="component" value="Chromosome"/>
</dbReference>
<dbReference type="GO" id="GO:0005737">
    <property type="term" value="C:cytoplasm"/>
    <property type="evidence" value="ECO:0007669"/>
    <property type="project" value="UniProtKB-SubCell"/>
</dbReference>
<dbReference type="GO" id="GO:0051539">
    <property type="term" value="F:4 iron, 4 sulfur cluster binding"/>
    <property type="evidence" value="ECO:0007669"/>
    <property type="project" value="UniProtKB-UniRule"/>
</dbReference>
<dbReference type="GO" id="GO:0043866">
    <property type="term" value="F:adenylyl-sulfate reductase (thioredoxin) activity"/>
    <property type="evidence" value="ECO:0007669"/>
    <property type="project" value="UniProtKB-EC"/>
</dbReference>
<dbReference type="GO" id="GO:0046872">
    <property type="term" value="F:metal ion binding"/>
    <property type="evidence" value="ECO:0007669"/>
    <property type="project" value="UniProtKB-KW"/>
</dbReference>
<dbReference type="GO" id="GO:0004604">
    <property type="term" value="F:phosphoadenylyl-sulfate reductase (thioredoxin) activity"/>
    <property type="evidence" value="ECO:0007669"/>
    <property type="project" value="UniProtKB-UniRule"/>
</dbReference>
<dbReference type="GO" id="GO:0070814">
    <property type="term" value="P:hydrogen sulfide biosynthetic process"/>
    <property type="evidence" value="ECO:0007669"/>
    <property type="project" value="UniProtKB-UniRule"/>
</dbReference>
<dbReference type="GO" id="GO:0019379">
    <property type="term" value="P:sulfate assimilation, phosphoadenylyl sulfate reduction by phosphoadenylyl-sulfate reductase (thioredoxin)"/>
    <property type="evidence" value="ECO:0007669"/>
    <property type="project" value="UniProtKB-UniRule"/>
</dbReference>
<dbReference type="CDD" id="cd23945">
    <property type="entry name" value="PAPS_reductase"/>
    <property type="match status" value="1"/>
</dbReference>
<dbReference type="FunFam" id="3.40.50.620:FF:000095">
    <property type="entry name" value="Phosphoadenosine phosphosulfate reductase"/>
    <property type="match status" value="1"/>
</dbReference>
<dbReference type="Gene3D" id="3.40.50.620">
    <property type="entry name" value="HUPs"/>
    <property type="match status" value="1"/>
</dbReference>
<dbReference type="HAMAP" id="MF_00063">
    <property type="entry name" value="CysH"/>
    <property type="match status" value="1"/>
</dbReference>
<dbReference type="InterPro" id="IPR004511">
    <property type="entry name" value="PAPS/APS_Rdtase"/>
</dbReference>
<dbReference type="InterPro" id="IPR002500">
    <property type="entry name" value="PAPS_reduct_dom"/>
</dbReference>
<dbReference type="InterPro" id="IPR014729">
    <property type="entry name" value="Rossmann-like_a/b/a_fold"/>
</dbReference>
<dbReference type="NCBIfam" id="TIGR00434">
    <property type="entry name" value="cysH"/>
    <property type="match status" value="1"/>
</dbReference>
<dbReference type="NCBIfam" id="NF002537">
    <property type="entry name" value="PRK02090.1"/>
    <property type="match status" value="1"/>
</dbReference>
<dbReference type="PANTHER" id="PTHR46509">
    <property type="entry name" value="PHOSPHOADENOSINE PHOSPHOSULFATE REDUCTASE"/>
    <property type="match status" value="1"/>
</dbReference>
<dbReference type="PANTHER" id="PTHR46509:SF1">
    <property type="entry name" value="PHOSPHOADENOSINE PHOSPHOSULFATE REDUCTASE"/>
    <property type="match status" value="1"/>
</dbReference>
<dbReference type="Pfam" id="PF01507">
    <property type="entry name" value="PAPS_reduct"/>
    <property type="match status" value="1"/>
</dbReference>
<dbReference type="PIRSF" id="PIRSF000857">
    <property type="entry name" value="PAPS_reductase"/>
    <property type="match status" value="1"/>
</dbReference>
<dbReference type="SUPFAM" id="SSF52402">
    <property type="entry name" value="Adenine nucleotide alpha hydrolases-like"/>
    <property type="match status" value="1"/>
</dbReference>
<reference key="1">
    <citation type="journal article" date="2008" name="Chem. Biol. Interact.">
        <title>Extending the Bacillus cereus group genomics to putative food-borne pathogens of different toxicity.</title>
        <authorList>
            <person name="Lapidus A."/>
            <person name="Goltsman E."/>
            <person name="Auger S."/>
            <person name="Galleron N."/>
            <person name="Segurens B."/>
            <person name="Dossat C."/>
            <person name="Land M.L."/>
            <person name="Broussolle V."/>
            <person name="Brillard J."/>
            <person name="Guinebretiere M.-H."/>
            <person name="Sanchis V."/>
            <person name="Nguen-the C."/>
            <person name="Lereclus D."/>
            <person name="Richardson P."/>
            <person name="Wincker P."/>
            <person name="Weissenbach J."/>
            <person name="Ehrlich S.D."/>
            <person name="Sorokin A."/>
        </authorList>
    </citation>
    <scope>NUCLEOTIDE SEQUENCE [LARGE SCALE GENOMIC DNA]</scope>
    <source>
        <strain>DSM 22905 / CIP 110041 / 391-98 / NVH 391-98</strain>
    </source>
</reference>
<sequence length="234" mass="27513">MLTYETWEEDSMSFSERDETKGALAVLEWAYKQYNDEIVYACSFGVEGMVLLHLINEVNPFAQVVFLDTNVHFCETYALIERVRQRFPKLNIIEKQPGLTLEEQEDKYGKDLWEHNPNLCCKLRKILPLEELLANKNAWISGLRREQSETRKHTKFINQDHRFQSIKICPLIHWTWKEVWRYVYKHNLPYNPLHDVGYPSIGCEKCTLPVGKYGSSRDGRWAGSVKTECGLHDQ</sequence>
<gene>
    <name evidence="1" type="primary">cysH</name>
    <name type="ordered locus">Bcer98_1143</name>
</gene>
<keyword id="KW-0963">Cytoplasm</keyword>
<keyword id="KW-0408">Iron</keyword>
<keyword id="KW-0411">Iron-sulfur</keyword>
<keyword id="KW-0479">Metal-binding</keyword>
<keyword id="KW-0560">Oxidoreductase</keyword>
<evidence type="ECO:0000255" key="1">
    <source>
        <dbReference type="HAMAP-Rule" id="MF_00063"/>
    </source>
</evidence>